<proteinExistence type="inferred from homology"/>
<dbReference type="EC" id="5.6.1.6" evidence="1"/>
<dbReference type="EMBL" id="DP000181">
    <property type="protein sequence ID" value="ABI93634.1"/>
    <property type="molecule type" value="Genomic_DNA"/>
</dbReference>
<dbReference type="SMR" id="Q07E42"/>
<dbReference type="GlyCosmos" id="Q07E42">
    <property type="glycosylation" value="2 sites, No reported glycans"/>
</dbReference>
<dbReference type="GO" id="GO:0016324">
    <property type="term" value="C:apical plasma membrane"/>
    <property type="evidence" value="ECO:0000250"/>
    <property type="project" value="UniProtKB"/>
</dbReference>
<dbReference type="GO" id="GO:0034707">
    <property type="term" value="C:chloride channel complex"/>
    <property type="evidence" value="ECO:0007669"/>
    <property type="project" value="UniProtKB-KW"/>
</dbReference>
<dbReference type="GO" id="GO:0005829">
    <property type="term" value="C:cytosol"/>
    <property type="evidence" value="ECO:0007669"/>
    <property type="project" value="TreeGrafter"/>
</dbReference>
<dbReference type="GO" id="GO:0005769">
    <property type="term" value="C:early endosome"/>
    <property type="evidence" value="ECO:0000250"/>
    <property type="project" value="UniProtKB"/>
</dbReference>
<dbReference type="GO" id="GO:0031901">
    <property type="term" value="C:early endosome membrane"/>
    <property type="evidence" value="ECO:0007669"/>
    <property type="project" value="UniProtKB-SubCell"/>
</dbReference>
<dbReference type="GO" id="GO:0005789">
    <property type="term" value="C:endoplasmic reticulum membrane"/>
    <property type="evidence" value="ECO:0000250"/>
    <property type="project" value="UniProtKB"/>
</dbReference>
<dbReference type="GO" id="GO:0016020">
    <property type="term" value="C:membrane"/>
    <property type="evidence" value="ECO:0000250"/>
    <property type="project" value="UniProtKB"/>
</dbReference>
<dbReference type="GO" id="GO:0005634">
    <property type="term" value="C:nucleus"/>
    <property type="evidence" value="ECO:0000250"/>
    <property type="project" value="UniProtKB"/>
</dbReference>
<dbReference type="GO" id="GO:0005886">
    <property type="term" value="C:plasma membrane"/>
    <property type="evidence" value="ECO:0000250"/>
    <property type="project" value="UniProtKB"/>
</dbReference>
<dbReference type="GO" id="GO:0055038">
    <property type="term" value="C:recycling endosome membrane"/>
    <property type="evidence" value="ECO:0007669"/>
    <property type="project" value="UniProtKB-SubCell"/>
</dbReference>
<dbReference type="GO" id="GO:0140359">
    <property type="term" value="F:ABC-type transporter activity"/>
    <property type="evidence" value="ECO:0007669"/>
    <property type="project" value="InterPro"/>
</dbReference>
<dbReference type="GO" id="GO:0005524">
    <property type="term" value="F:ATP binding"/>
    <property type="evidence" value="ECO:0007669"/>
    <property type="project" value="UniProtKB-KW"/>
</dbReference>
<dbReference type="GO" id="GO:0016887">
    <property type="term" value="F:ATP hydrolysis activity"/>
    <property type="evidence" value="ECO:0000250"/>
    <property type="project" value="UniProtKB"/>
</dbReference>
<dbReference type="GO" id="GO:0015106">
    <property type="term" value="F:bicarbonate transmembrane transporter activity"/>
    <property type="evidence" value="ECO:0000250"/>
    <property type="project" value="UniProtKB"/>
</dbReference>
<dbReference type="GO" id="GO:0005254">
    <property type="term" value="F:chloride channel activity"/>
    <property type="evidence" value="ECO:0000250"/>
    <property type="project" value="UniProtKB"/>
</dbReference>
<dbReference type="GO" id="GO:0019869">
    <property type="term" value="F:chloride channel inhibitor activity"/>
    <property type="evidence" value="ECO:0000250"/>
    <property type="project" value="UniProtKB"/>
</dbReference>
<dbReference type="GO" id="GO:0015108">
    <property type="term" value="F:chloride transmembrane transporter activity"/>
    <property type="evidence" value="ECO:0000250"/>
    <property type="project" value="UniProtKB"/>
</dbReference>
<dbReference type="GO" id="GO:0005260">
    <property type="term" value="F:intracellularly ATP-gated chloride channel activity"/>
    <property type="evidence" value="ECO:0000250"/>
    <property type="project" value="UniProtKB"/>
</dbReference>
<dbReference type="GO" id="GO:0015701">
    <property type="term" value="P:bicarbonate transport"/>
    <property type="evidence" value="ECO:0000250"/>
    <property type="project" value="UniProtKB"/>
</dbReference>
<dbReference type="GO" id="GO:0071320">
    <property type="term" value="P:cellular response to cAMP"/>
    <property type="evidence" value="ECO:0000250"/>
    <property type="project" value="UniProtKB"/>
</dbReference>
<dbReference type="GO" id="GO:1904322">
    <property type="term" value="P:cellular response to forskolin"/>
    <property type="evidence" value="ECO:0000250"/>
    <property type="project" value="UniProtKB"/>
</dbReference>
<dbReference type="GO" id="GO:1902476">
    <property type="term" value="P:chloride transmembrane transport"/>
    <property type="evidence" value="ECO:0000250"/>
    <property type="project" value="UniProtKB"/>
</dbReference>
<dbReference type="GO" id="GO:0051454">
    <property type="term" value="P:intracellular pH elevation"/>
    <property type="evidence" value="ECO:0000250"/>
    <property type="project" value="UniProtKB"/>
</dbReference>
<dbReference type="GO" id="GO:0060081">
    <property type="term" value="P:membrane hyperpolarization"/>
    <property type="evidence" value="ECO:0000250"/>
    <property type="project" value="UniProtKB"/>
</dbReference>
<dbReference type="GO" id="GO:0050891">
    <property type="term" value="P:multicellular organismal-level water homeostasis"/>
    <property type="evidence" value="ECO:0000250"/>
    <property type="project" value="UniProtKB"/>
</dbReference>
<dbReference type="GO" id="GO:0034976">
    <property type="term" value="P:response to endoplasmic reticulum stress"/>
    <property type="evidence" value="ECO:0000250"/>
    <property type="project" value="UniProtKB"/>
</dbReference>
<dbReference type="GO" id="GO:0048240">
    <property type="term" value="P:sperm capacitation"/>
    <property type="evidence" value="ECO:0000250"/>
    <property type="project" value="UniProtKB"/>
</dbReference>
<dbReference type="GO" id="GO:0035377">
    <property type="term" value="P:transepithelial water transport"/>
    <property type="evidence" value="ECO:0000250"/>
    <property type="project" value="UniProtKB"/>
</dbReference>
<dbReference type="CDD" id="cd18594">
    <property type="entry name" value="ABC_6TM_CFTR_D1"/>
    <property type="match status" value="1"/>
</dbReference>
<dbReference type="CDD" id="cd18600">
    <property type="entry name" value="ABC_6TM_CFTR_D2"/>
    <property type="match status" value="1"/>
</dbReference>
<dbReference type="CDD" id="cd03291">
    <property type="entry name" value="ABCC_CFTR1"/>
    <property type="match status" value="1"/>
</dbReference>
<dbReference type="CDD" id="cd03289">
    <property type="entry name" value="ABCC_CFTR2"/>
    <property type="match status" value="1"/>
</dbReference>
<dbReference type="FunFam" id="1.20.1560.10:FF:000017">
    <property type="entry name" value="Cystic fibrosis transmembrane conductance regulator"/>
    <property type="match status" value="1"/>
</dbReference>
<dbReference type="FunFam" id="1.20.1560.10:FF:000019">
    <property type="entry name" value="Cystic fibrosis transmembrane conductance regulator"/>
    <property type="match status" value="1"/>
</dbReference>
<dbReference type="FunFam" id="3.40.50.300:FF:000581">
    <property type="entry name" value="Cystic fibrosis transmembrane conductance regulator"/>
    <property type="match status" value="1"/>
</dbReference>
<dbReference type="FunFam" id="3.40.50.300:FF:000591">
    <property type="entry name" value="Cystic fibrosis transmembrane conductance regulator"/>
    <property type="match status" value="1"/>
</dbReference>
<dbReference type="Gene3D" id="1.20.1560.10">
    <property type="entry name" value="ABC transporter type 1, transmembrane domain"/>
    <property type="match status" value="2"/>
</dbReference>
<dbReference type="Gene3D" id="3.40.50.300">
    <property type="entry name" value="P-loop containing nucleotide triphosphate hydrolases"/>
    <property type="match status" value="2"/>
</dbReference>
<dbReference type="InterPro" id="IPR003593">
    <property type="entry name" value="AAA+_ATPase"/>
</dbReference>
<dbReference type="InterPro" id="IPR011527">
    <property type="entry name" value="ABC1_TM_dom"/>
</dbReference>
<dbReference type="InterPro" id="IPR036640">
    <property type="entry name" value="ABC1_TM_sf"/>
</dbReference>
<dbReference type="InterPro" id="IPR003439">
    <property type="entry name" value="ABC_transporter-like_ATP-bd"/>
</dbReference>
<dbReference type="InterPro" id="IPR017871">
    <property type="entry name" value="ABC_transporter-like_CS"/>
</dbReference>
<dbReference type="InterPro" id="IPR050173">
    <property type="entry name" value="ABC_transporter_C-like"/>
</dbReference>
<dbReference type="InterPro" id="IPR009147">
    <property type="entry name" value="CFTR/ABCC7"/>
</dbReference>
<dbReference type="InterPro" id="IPR047082">
    <property type="entry name" value="CFTR1_ATP-bd_dom1"/>
</dbReference>
<dbReference type="InterPro" id="IPR025837">
    <property type="entry name" value="CFTR_reg_dom"/>
</dbReference>
<dbReference type="InterPro" id="IPR027417">
    <property type="entry name" value="P-loop_NTPase"/>
</dbReference>
<dbReference type="NCBIfam" id="TIGR01271">
    <property type="entry name" value="CFTR_protein"/>
    <property type="match status" value="1"/>
</dbReference>
<dbReference type="PANTHER" id="PTHR24223">
    <property type="entry name" value="ATP-BINDING CASSETTE SUB-FAMILY C"/>
    <property type="match status" value="1"/>
</dbReference>
<dbReference type="PANTHER" id="PTHR24223:SF19">
    <property type="entry name" value="CYSTIC FIBROSIS TRANSMEMBRANE CONDUCTANCE REGULATOR"/>
    <property type="match status" value="1"/>
</dbReference>
<dbReference type="Pfam" id="PF00664">
    <property type="entry name" value="ABC_membrane"/>
    <property type="match status" value="2"/>
</dbReference>
<dbReference type="Pfam" id="PF00005">
    <property type="entry name" value="ABC_tran"/>
    <property type="match status" value="2"/>
</dbReference>
<dbReference type="Pfam" id="PF14396">
    <property type="entry name" value="CFTR_R"/>
    <property type="match status" value="1"/>
</dbReference>
<dbReference type="PRINTS" id="PR01851">
    <property type="entry name" value="CYSFIBREGLTR"/>
</dbReference>
<dbReference type="SMART" id="SM00382">
    <property type="entry name" value="AAA"/>
    <property type="match status" value="2"/>
</dbReference>
<dbReference type="SUPFAM" id="SSF90123">
    <property type="entry name" value="ABC transporter transmembrane region"/>
    <property type="match status" value="2"/>
</dbReference>
<dbReference type="SUPFAM" id="SSF52540">
    <property type="entry name" value="P-loop containing nucleoside triphosphate hydrolases"/>
    <property type="match status" value="2"/>
</dbReference>
<dbReference type="PROSITE" id="PS50929">
    <property type="entry name" value="ABC_TM1F"/>
    <property type="match status" value="2"/>
</dbReference>
<dbReference type="PROSITE" id="PS00211">
    <property type="entry name" value="ABC_TRANSPORTER_1"/>
    <property type="match status" value="1"/>
</dbReference>
<dbReference type="PROSITE" id="PS50893">
    <property type="entry name" value="ABC_TRANSPORTER_2"/>
    <property type="match status" value="2"/>
</dbReference>
<protein>
    <recommendedName>
        <fullName evidence="1">Cystic fibrosis transmembrane conductance regulator</fullName>
        <shortName>CFTR</shortName>
    </recommendedName>
    <alternativeName>
        <fullName>ATP-binding cassette sub-family C member 7</fullName>
    </alternativeName>
    <alternativeName>
        <fullName>Channel conductance-controlling ATPase</fullName>
        <ecNumber evidence="1">5.6.1.6</ecNumber>
    </alternativeName>
    <alternativeName>
        <fullName>cAMP-dependent chloride channel</fullName>
    </alternativeName>
</protein>
<sequence length="1482" mass="168353">MQRSPLEKASVISKLFFSWTRPILRKGYRQRLELSDIYQIPSADSADNLSEKLEREWDRELASKKNPKLINALRRCFFWRFTFYGIILYLGEVTKAVQPLLLGRIIASYDPDNKVERSIAIYLAVGLCLLFVVRTLLLHPAIFGLHHIGMQMRIAMFSLIYKKTLKLSSRVLDKISIGQLVSLLSNNLNKFDEGLALAHFVWIAPLQVTLLMGLLWDLLQASAFSGLGVLIILACFQAGFGRMMMKYRDQRAGKINERLVITSEMIENIQSVKAYCWEEALEKMIENFRQSELRLTRKAAYVRYFNSSAFFFSGFFVVFLSVLPYALIKGIILRKIFTTISFCIVLRMAVTRQFPWAVQTWYDSLGAINKIQDFLQKQEYKSLEYNLTTTDVVMETVTAFWEERFGELFEKAKQNNNNRKISNVDNSLFFSNFSLLGTPVLKDINFKIERGQLLAVAGSTGAGKTSLLMMIMGELEPSEGKIKHSGRISFCSQFSWIMPGTIKENIIFGVCYDEYRYRSVIKACQLVEDISKFAEKDNTVLGEGGITLSGGQRARISLARAVYKDADLYLLDSPFGYLDVLTEKEIFESCVCKLMANKTRILVTSKMEHLKKADKILILHEGSSYFYGTFSELQNLRPDFSSKLMGYDSFDQFSAERRNSIITETLRRFSLEGDAAHSWNETKKQSFKQTGEFGEKRKNSILNPINSLRRISITQKTPLPMNGIDEDSGETLERRLSLVPDCEQGEGILPRSNLINTGPTLQRGRRQSVLNLMTHSSGNQGQNIHRRTTAFTRKMSLAPQANLVEMDIYSRRLSQDSGLEISEEINEEDLKECFLDDVESIPAVTTWNTYLRYITVHKRLIFVLIWCFVVFLIEVAASLVLLCLLSKVSPEDKGNTTKSANDSSAVIITSTSSFYFLYIYVGVADTFLALGLFRGLPLVHTLITVSKILHHKMLHSVLQAPMSTLNTLKAGGILNRFSKDIAILDDLLPLTIFDFIQLLLIVIGAVAVVSILKPYIFLATVPVIVAFVLLRAYFLHTSQQLKQLESEARSPIFTHLVTSLKGLWTLRAFGRQPYFEALFHKALNLHTANWFLYLSTLRWFQMRIEMIFVIFFIAVTFISILTTGEGEGTVGIILTLAMNIMSTLQWAVNSSIDVDSLMRSVSRVFKFVDIPTEENKPTKSIKLPKDGQLSKVMIIENQHVKKDDIWPSGGQMTVKDLTAKYIDGGNAILENISFSISPGQRVGLLGRTGSGKSTLLSAFLRLLNTKGEIQIDGVSWDSITLQEWRKAFGVIPQKVFIFSGTFRKNLDPYGQWSDQEIWKVADEVGLRSVIEQFPGKLDFVLVDGGYVLSHGHKQLMCLARSVLSKAKILLLDEPSAHLDPITYQIIRRTLKQAFADCTVILCEHRIEAMLECQRFLVIEENKVRQYDSIQRLLSEKSLFRQAISPSDRVKLFPHQNSGKHKSRSKITALKEETEEEVQDTRL</sequence>
<comment type="function">
    <text evidence="1 2">Epithelial ion channel that plays an important role in the regulation of epithelial ion and water transport and fluid homeostasis. Mediates the transport of chloride ions across the cell membrane (By similarity). Possesses an intrinsic ATPase activity and utilizes ATP to gate its channel; the passive flow of anions through the channel is gated by cycles of ATP binding and hydrolysis by the ATP-binding domains (By similarity). The ion channel is also permeable to HCO(3)(-); selectivity depends on the extracellular chloride concentration. Exerts its function also by modulating the activity of other ion channels and transporters. Contributes to the regulation of the pH and the ion content of the epithelial fluid layer. Modulates the activity of the epithelial sodium channel (ENaC) complex, in part by regulating the cell surface expression of the ENaC complex. May regulate bicarbonate secretion and salvage in epithelial cells by regulating the transporter SLC4A7. Can inhibit the chloride channel activity of ANO1 (By similarity). Plays a role in the chloride and bicarbonate homeostasis during sperm epididymal maturation and capacitation (By similarity).</text>
</comment>
<comment type="catalytic activity">
    <reaction evidence="1">
        <text>ATP + H2O + closed Cl(-) channel = ADP + phosphate + open Cl(-) channel.</text>
        <dbReference type="EC" id="5.6.1.6"/>
    </reaction>
</comment>
<comment type="catalytic activity">
    <reaction evidence="1">
        <text>chloride(in) = chloride(out)</text>
        <dbReference type="Rhea" id="RHEA:29823"/>
        <dbReference type="ChEBI" id="CHEBI:17996"/>
    </reaction>
</comment>
<comment type="catalytic activity">
    <reaction evidence="1">
        <text>hydrogencarbonate(in) = hydrogencarbonate(out)</text>
        <dbReference type="Rhea" id="RHEA:28695"/>
        <dbReference type="ChEBI" id="CHEBI:17544"/>
    </reaction>
</comment>
<comment type="catalytic activity">
    <reaction evidence="1">
        <text>ATP + H2O = ADP + phosphate + H(+)</text>
        <dbReference type="Rhea" id="RHEA:13065"/>
        <dbReference type="ChEBI" id="CHEBI:15377"/>
        <dbReference type="ChEBI" id="CHEBI:15378"/>
        <dbReference type="ChEBI" id="CHEBI:30616"/>
        <dbReference type="ChEBI" id="CHEBI:43474"/>
        <dbReference type="ChEBI" id="CHEBI:456216"/>
    </reaction>
    <physiologicalReaction direction="left-to-right" evidence="1">
        <dbReference type="Rhea" id="RHEA:13066"/>
    </physiologicalReaction>
</comment>
<comment type="subunit">
    <text evidence="1 2 3">Monomer; does not require oligomerization for channel activity. May form oligomers in the membrane (By similarity). Interacts with SLC26A3, SLC26A6 and NHERF1 (By similarity). Interacts with SHANK2 (By similarity). Interacts with MYO6 (By similarity). Interacts (via C-terminus) with GOPC (via PDZ domain); this promotes CFTR internalization and thereby decreases channel activity. Interacts with SLC4A7 through NHERF1. Found in a complex with MYO5B and RAB11A. Interacts with ANO1. Interacts with SLC26A8 (By similarity). Interacts with AHCYL1; the interaction increases CFTR activity (By similarity). Interacts with CSE1L (By similarity). The core-glycosylated form interacts with GORASP2 (via PDZ GRASP-type 1 domain) in respone to ER stress (By similarity). Interacts with MARCHF2; the interaction leads to CFTR ubiqtuitination and degradation (By similarity). Interacts with ADGRG2 (By similarity).</text>
</comment>
<comment type="subcellular location">
    <subcellularLocation>
        <location evidence="2">Apical cell membrane</location>
        <topology evidence="1">Multi-pass membrane protein</topology>
    </subcellularLocation>
    <subcellularLocation>
        <location evidence="1">Early endosome membrane</location>
        <topology evidence="1">Multi-pass membrane protein</topology>
    </subcellularLocation>
    <subcellularLocation>
        <location evidence="2">Cell membrane</location>
        <topology evidence="1">Multi-pass membrane protein</topology>
    </subcellularLocation>
    <subcellularLocation>
        <location evidence="1">Recycling endosome membrane</location>
        <topology evidence="1">Multi-pass membrane protein</topology>
    </subcellularLocation>
    <subcellularLocation>
        <location evidence="1">Endoplasmic reticulum membrane</location>
        <topology evidence="1">Multi-pass membrane protein</topology>
    </subcellularLocation>
    <subcellularLocation>
        <location evidence="3">Nucleus</location>
    </subcellularLocation>
    <text evidence="1 3">The channel is internalized from the cell surface into an endosomal recycling compartment, from where it is recycled to the cell membrane. In the oviduct and bronchus, detected on the apical side of epithelial cells, but not associated with cilia. In Sertoli cells, a processed product is detected in the nucleus. ER stress induces GORASP2-mediated unconventional (ER/Golgi-independent) trafficking of core-glycosylated CFTR to cell membrane.</text>
</comment>
<comment type="domain">
    <text evidence="1 2">Binds and hydrolyzes ATP via the two cytoplasmic ABC transporter nucleotide-binding domains. The two ATP-binding domains interact with each other, forming a head-to-tail dimer. Normal ATPase activity requires interaction between the two domains. The first ABC transporter nucleotide-binding domain has no ATPase activity by itself.</text>
</comment>
<comment type="domain">
    <text evidence="1">The PDZ-binding motif mediates interactions with GOPC and with the SLC4A7, NHERF1/EBP50 complex.</text>
</comment>
<comment type="domain">
    <text evidence="1">The disordered R region mediates channel activation when it is phosphorylated, but not in the absence of phosphorylation.</text>
</comment>
<comment type="PTM">
    <text evidence="1">N-glycosylated.</text>
</comment>
<comment type="PTM">
    <text evidence="1">Phosphorylated; cAMP treatment promotes phosphorylation and activates the channel. Dephosphorylation decreases the ATPase activity (in vitro). Phosphorylation at PKA sites activates the channel. Phosphorylation at PKC sites enhances the response to phosphorylation by PKA. Phosphorylated by AMPK; this inhibits channel activity.</text>
</comment>
<comment type="PTM">
    <text evidence="1">Ubiquitinated, leading to its degradation in the lysosome. Deubiquitination by USP10 in early endosomes enhances its endocytic recycling to the cell membrane. Ubiquitinated by RNF185 during ER stress. Ubiquitinated by MARCHF2 (By similarity).</text>
</comment>
<comment type="similarity">
    <text evidence="8">Belongs to the ABC transporter superfamily. ABCC family. CFTR transporter (TC 3.A.1.202) subfamily.</text>
</comment>
<gene>
    <name evidence="1" type="primary">CFTR</name>
    <name type="synonym">ABCC7</name>
</gene>
<name>CFTR_DASNO</name>
<keyword id="KW-0067">ATP-binding</keyword>
<keyword id="KW-1003">Cell membrane</keyword>
<keyword id="KW-0868">Chloride</keyword>
<keyword id="KW-0869">Chloride channel</keyword>
<keyword id="KW-0256">Endoplasmic reticulum</keyword>
<keyword id="KW-0967">Endosome</keyword>
<keyword id="KW-0325">Glycoprotein</keyword>
<keyword id="KW-0407">Ion channel</keyword>
<keyword id="KW-0406">Ion transport</keyword>
<keyword id="KW-0413">Isomerase</keyword>
<keyword id="KW-1017">Isopeptide bond</keyword>
<keyword id="KW-0449">Lipoprotein</keyword>
<keyword id="KW-0472">Membrane</keyword>
<keyword id="KW-0547">Nucleotide-binding</keyword>
<keyword id="KW-0539">Nucleus</keyword>
<keyword id="KW-0564">Palmitate</keyword>
<keyword id="KW-0597">Phosphoprotein</keyword>
<keyword id="KW-0677">Repeat</keyword>
<keyword id="KW-0812">Transmembrane</keyword>
<keyword id="KW-1133">Transmembrane helix</keyword>
<keyword id="KW-0813">Transport</keyword>
<keyword id="KW-0832">Ubl conjugation</keyword>
<organism>
    <name type="scientific">Dasypus novemcinctus</name>
    <name type="common">Nine-banded armadillo</name>
    <dbReference type="NCBI Taxonomy" id="9361"/>
    <lineage>
        <taxon>Eukaryota</taxon>
        <taxon>Metazoa</taxon>
        <taxon>Chordata</taxon>
        <taxon>Craniata</taxon>
        <taxon>Vertebrata</taxon>
        <taxon>Euteleostomi</taxon>
        <taxon>Mammalia</taxon>
        <taxon>Eutheria</taxon>
        <taxon>Xenarthra</taxon>
        <taxon>Cingulata</taxon>
        <taxon>Dasypodidae</taxon>
        <taxon>Dasypus</taxon>
    </lineage>
</organism>
<evidence type="ECO:0000250" key="1">
    <source>
        <dbReference type="UniProtKB" id="P13569"/>
    </source>
</evidence>
<evidence type="ECO:0000250" key="2">
    <source>
        <dbReference type="UniProtKB" id="P26361"/>
    </source>
</evidence>
<evidence type="ECO:0000250" key="3">
    <source>
        <dbReference type="UniProtKB" id="P34158"/>
    </source>
</evidence>
<evidence type="ECO:0000255" key="4"/>
<evidence type="ECO:0000255" key="5">
    <source>
        <dbReference type="PROSITE-ProRule" id="PRU00434"/>
    </source>
</evidence>
<evidence type="ECO:0000255" key="6">
    <source>
        <dbReference type="PROSITE-ProRule" id="PRU00441"/>
    </source>
</evidence>
<evidence type="ECO:0000256" key="7">
    <source>
        <dbReference type="SAM" id="MobiDB-lite"/>
    </source>
</evidence>
<evidence type="ECO:0000305" key="8"/>
<feature type="chain" id="PRO_0000260773" description="Cystic fibrosis transmembrane conductance regulator">
    <location>
        <begin position="1"/>
        <end position="1482"/>
    </location>
</feature>
<feature type="topological domain" description="Cytoplasmic" evidence="1">
    <location>
        <begin position="1"/>
        <end position="77"/>
    </location>
</feature>
<feature type="transmembrane region" description="Helical; Name=1" evidence="1">
    <location>
        <begin position="78"/>
        <end position="98"/>
    </location>
</feature>
<feature type="topological domain" description="Extracellular" evidence="1">
    <location>
        <begin position="99"/>
        <end position="122"/>
    </location>
</feature>
<feature type="transmembrane region" description="Helical; Name=2" evidence="1">
    <location>
        <begin position="123"/>
        <end position="146"/>
    </location>
</feature>
<feature type="topological domain" description="Cytoplasmic" evidence="1">
    <location>
        <begin position="147"/>
        <end position="195"/>
    </location>
</feature>
<feature type="transmembrane region" description="Helical; Name=3" evidence="1">
    <location>
        <begin position="196"/>
        <end position="216"/>
    </location>
</feature>
<feature type="topological domain" description="Extracellular" evidence="1">
    <location>
        <begin position="217"/>
        <end position="222"/>
    </location>
</feature>
<feature type="transmembrane region" description="Helical; Name=4" evidence="1">
    <location>
        <begin position="223"/>
        <end position="243"/>
    </location>
</feature>
<feature type="topological domain" description="Cytoplasmic" evidence="1">
    <location>
        <begin position="244"/>
        <end position="298"/>
    </location>
</feature>
<feature type="transmembrane region" description="Helical; Name=5" evidence="1">
    <location>
        <begin position="299"/>
        <end position="319"/>
    </location>
</feature>
<feature type="topological domain" description="Extracellular" evidence="1">
    <location>
        <begin position="320"/>
        <end position="339"/>
    </location>
</feature>
<feature type="transmembrane region" description="Helical; Name=6" evidence="1">
    <location>
        <begin position="340"/>
        <end position="358"/>
    </location>
</feature>
<feature type="topological domain" description="Cytoplasmic" evidence="1">
    <location>
        <begin position="359"/>
        <end position="859"/>
    </location>
</feature>
<feature type="transmembrane region" description="Helical; Name=7" evidence="1">
    <location>
        <begin position="860"/>
        <end position="880"/>
    </location>
</feature>
<feature type="topological domain" description="Extracellular" evidence="1">
    <location>
        <begin position="881"/>
        <end position="919"/>
    </location>
</feature>
<feature type="transmembrane region" description="Discontinuously helical; Name=8" evidence="1">
    <location>
        <begin position="920"/>
        <end position="940"/>
    </location>
</feature>
<feature type="topological domain" description="Cytoplasmic" evidence="1">
    <location>
        <begin position="941"/>
        <end position="991"/>
    </location>
</feature>
<feature type="transmembrane region" description="Helical; Name=9" evidence="1">
    <location>
        <begin position="992"/>
        <end position="1012"/>
    </location>
</feature>
<feature type="topological domain" description="Extracellular" evidence="1">
    <location>
        <begin position="1013"/>
        <end position="1014"/>
    </location>
</feature>
<feature type="transmembrane region" description="Helical; Name=10" evidence="1">
    <location>
        <begin position="1015"/>
        <end position="1035"/>
    </location>
</feature>
<feature type="topological domain" description="Cytoplasmic" evidence="1">
    <location>
        <begin position="1036"/>
        <end position="1096"/>
    </location>
</feature>
<feature type="transmembrane region" description="Helical; Name=11" evidence="1">
    <location>
        <begin position="1097"/>
        <end position="1117"/>
    </location>
</feature>
<feature type="topological domain" description="Extracellular" evidence="1">
    <location>
        <begin position="1118"/>
        <end position="1131"/>
    </location>
</feature>
<feature type="transmembrane region" description="Helical; Name=12" evidence="1">
    <location>
        <begin position="1132"/>
        <end position="1152"/>
    </location>
</feature>
<feature type="topological domain" description="Cytoplasmic" evidence="1">
    <location>
        <begin position="1153"/>
        <end position="1482"/>
    </location>
</feature>
<feature type="domain" description="ABC transmembrane type-1 1" evidence="6">
    <location>
        <begin position="81"/>
        <end position="365"/>
    </location>
</feature>
<feature type="domain" description="ABC transporter 1" evidence="5">
    <location>
        <begin position="423"/>
        <end position="646"/>
    </location>
</feature>
<feature type="domain" description="ABC transmembrane type-1 2" evidence="6">
    <location>
        <begin position="860"/>
        <end position="1156"/>
    </location>
</feature>
<feature type="domain" description="ABC transporter 2" evidence="5">
    <location>
        <begin position="1212"/>
        <end position="1445"/>
    </location>
</feature>
<feature type="region of interest" description="Disordered R region" evidence="1">
    <location>
        <begin position="654"/>
        <end position="832"/>
    </location>
</feature>
<feature type="region of interest" description="Interaction with GORASP2" evidence="1">
    <location>
        <begin position="1388"/>
        <end position="1482"/>
    </location>
</feature>
<feature type="region of interest" description="Disordered" evidence="7">
    <location>
        <begin position="1450"/>
        <end position="1482"/>
    </location>
</feature>
<feature type="short sequence motif" description="PDZ-binding" evidence="1">
    <location>
        <begin position="1480"/>
        <end position="1482"/>
    </location>
</feature>
<feature type="compositionally biased region" description="Acidic residues" evidence="7">
    <location>
        <begin position="1472"/>
        <end position="1482"/>
    </location>
</feature>
<feature type="binding site" evidence="1">
    <location>
        <position position="401"/>
    </location>
    <ligand>
        <name>ATP</name>
        <dbReference type="ChEBI" id="CHEBI:30616"/>
        <label>1</label>
    </ligand>
</feature>
<feature type="binding site" evidence="1">
    <location>
        <position position="434"/>
    </location>
    <ligand>
        <name>ATP</name>
        <dbReference type="ChEBI" id="CHEBI:30616"/>
        <label>1</label>
    </ligand>
</feature>
<feature type="binding site" evidence="5">
    <location>
        <begin position="458"/>
        <end position="465"/>
    </location>
    <ligand>
        <name>ATP</name>
        <dbReference type="ChEBI" id="CHEBI:30616"/>
        <label>1</label>
    </ligand>
</feature>
<feature type="binding site" evidence="2">
    <location>
        <position position="493"/>
    </location>
    <ligand>
        <name>ATP</name>
        <dbReference type="ChEBI" id="CHEBI:30616"/>
        <label>1</label>
    </ligand>
</feature>
<feature type="binding site" evidence="1">
    <location>
        <position position="1221"/>
    </location>
    <ligand>
        <name>ATP</name>
        <dbReference type="ChEBI" id="CHEBI:30616"/>
        <label>2</label>
    </ligand>
</feature>
<feature type="binding site" evidence="5">
    <location>
        <begin position="1246"/>
        <end position="1253"/>
    </location>
    <ligand>
        <name>ATP</name>
        <dbReference type="ChEBI" id="CHEBI:30616"/>
        <label>2</label>
    </ligand>
</feature>
<feature type="modified residue" description="Phosphoserine" evidence="1">
    <location>
        <position position="549"/>
    </location>
</feature>
<feature type="modified residue" description="Phosphoserine" evidence="1">
    <location>
        <position position="660"/>
    </location>
</feature>
<feature type="modified residue" description="Phosphoserine; by PKA" evidence="1">
    <location>
        <position position="670"/>
    </location>
</feature>
<feature type="modified residue" description="Phosphoserine" evidence="1">
    <location>
        <position position="686"/>
    </location>
</feature>
<feature type="modified residue" description="Phosphoserine" evidence="1">
    <location>
        <position position="700"/>
    </location>
</feature>
<feature type="modified residue" description="Phosphoserine" evidence="1">
    <location>
        <position position="712"/>
    </location>
</feature>
<feature type="modified residue" description="Phosphothreonine" evidence="1">
    <location>
        <position position="717"/>
    </location>
</feature>
<feature type="modified residue" description="Phosphoserine" evidence="1">
    <location>
        <position position="737"/>
    </location>
</feature>
<feature type="modified residue" description="Phosphoserine" evidence="1">
    <location>
        <position position="768"/>
    </location>
</feature>
<feature type="modified residue" description="Phosphoserine" evidence="1">
    <location>
        <position position="796"/>
    </location>
</feature>
<feature type="modified residue" description="Phosphoserine" evidence="1">
    <location>
        <position position="814"/>
    </location>
</feature>
<feature type="modified residue" description="Phosphoserine" evidence="1">
    <location>
        <position position="1446"/>
    </location>
</feature>
<feature type="lipid moiety-binding region" description="S-palmitoyl cysteine" evidence="1">
    <location>
        <position position="524"/>
    </location>
</feature>
<feature type="lipid moiety-binding region" description="S-palmitoyl cysteine" evidence="1">
    <location>
        <position position="1397"/>
    </location>
</feature>
<feature type="glycosylation site" description="N-linked (GlcNAc...) asparagine" evidence="4">
    <location>
        <position position="895"/>
    </location>
</feature>
<feature type="glycosylation site" description="N-linked (GlcNAc...) asparagine" evidence="4">
    <location>
        <position position="901"/>
    </location>
</feature>
<feature type="cross-link" description="Glycyl lysine isopeptide (Lys-Gly) (interchain with G-Cter in ubiquitin)" evidence="1">
    <location>
        <position position="688"/>
    </location>
</feature>
<reference key="1">
    <citation type="submission" date="2006-09" db="EMBL/GenBank/DDBJ databases">
        <title>NISC comparative sequencing initiative.</title>
        <authorList>
            <person name="Antonellis A."/>
            <person name="Ayele K."/>
            <person name="Benjamin B."/>
            <person name="Blakesley R.W."/>
            <person name="Boakye A."/>
            <person name="Bouffard G.G."/>
            <person name="Brinkley C."/>
            <person name="Brooks S."/>
            <person name="Chu G."/>
            <person name="Coleman H."/>
            <person name="Engle J."/>
            <person name="Gestole M."/>
            <person name="Greene A."/>
            <person name="Guan X."/>
            <person name="Gupta J."/>
            <person name="Haghighi P."/>
            <person name="Han J."/>
            <person name="Hansen N."/>
            <person name="Ho S.-L."/>
            <person name="Hu P."/>
            <person name="Hunter G."/>
            <person name="Hurle B."/>
            <person name="Idol J.R."/>
            <person name="Kwong P."/>
            <person name="Laric P."/>
            <person name="Larson S."/>
            <person name="Lee-Lin S.-Q."/>
            <person name="Legaspi R."/>
            <person name="Madden M."/>
            <person name="Maduro Q.L."/>
            <person name="Maduro V.B."/>
            <person name="Margulies E.H."/>
            <person name="Masiello C."/>
            <person name="Maskeri B."/>
            <person name="McDowell J."/>
            <person name="Mojidi H.A."/>
            <person name="Mullikin J.C."/>
            <person name="Oestreicher J.S."/>
            <person name="Park M."/>
            <person name="Portnoy M.E."/>
            <person name="Prasad A."/>
            <person name="Puri O."/>
            <person name="Reddix-Dugue N."/>
            <person name="Schandler K."/>
            <person name="Schueler M.G."/>
            <person name="Sison C."/>
            <person name="Stantripop S."/>
            <person name="Stephen E."/>
            <person name="Taye A."/>
            <person name="Thomas J.W."/>
            <person name="Thomas P.J."/>
            <person name="Tsipouri V."/>
            <person name="Ung L."/>
            <person name="Vogt J.L."/>
            <person name="Wetherby K.D."/>
            <person name="Young A."/>
            <person name="Green E.D."/>
        </authorList>
    </citation>
    <scope>NUCLEOTIDE SEQUENCE [LARGE SCALE GENOMIC DNA]</scope>
</reference>
<accession>Q07E42</accession>